<reference key="1">
    <citation type="journal article" date="2010" name="Stand. Genomic Sci.">
        <title>Complete genome sequence of Rhizobium leguminosarum bv trifolii strain WSM2304, an effective microsymbiont of the South American clover Trifolium polymorphum.</title>
        <authorList>
            <person name="Reeve W."/>
            <person name="O'Hara G."/>
            <person name="Chain P."/>
            <person name="Ardley J."/>
            <person name="Brau L."/>
            <person name="Nandesena K."/>
            <person name="Tiwari R."/>
            <person name="Malfatti S."/>
            <person name="Kiss H."/>
            <person name="Lapidus A."/>
            <person name="Copeland A."/>
            <person name="Nolan M."/>
            <person name="Land M."/>
            <person name="Ivanova N."/>
            <person name="Mavromatis K."/>
            <person name="Markowitz V."/>
            <person name="Kyrpides N."/>
            <person name="Melino V."/>
            <person name="Denton M."/>
            <person name="Yates R."/>
            <person name="Howieson J."/>
        </authorList>
    </citation>
    <scope>NUCLEOTIDE SEQUENCE [LARGE SCALE GENOMIC DNA]</scope>
    <source>
        <strain>WSM2304</strain>
    </source>
</reference>
<gene>
    <name evidence="1" type="primary">ispG</name>
    <name type="ordered locus">Rleg2_3831</name>
</gene>
<accession>B5ZUA0</accession>
<dbReference type="EC" id="1.17.7.3" evidence="1"/>
<dbReference type="EMBL" id="CP001191">
    <property type="protein sequence ID" value="ACI57093.1"/>
    <property type="molecule type" value="Genomic_DNA"/>
</dbReference>
<dbReference type="RefSeq" id="WP_012559321.1">
    <property type="nucleotide sequence ID" value="NC_011369.1"/>
</dbReference>
<dbReference type="SMR" id="B5ZUA0"/>
<dbReference type="STRING" id="395492.Rleg2_3831"/>
<dbReference type="KEGG" id="rlt:Rleg2_3831"/>
<dbReference type="eggNOG" id="COG0821">
    <property type="taxonomic scope" value="Bacteria"/>
</dbReference>
<dbReference type="HOGENOM" id="CLU_042258_1_0_5"/>
<dbReference type="UniPathway" id="UPA00056">
    <property type="reaction ID" value="UER00096"/>
</dbReference>
<dbReference type="Proteomes" id="UP000008330">
    <property type="component" value="Chromosome"/>
</dbReference>
<dbReference type="GO" id="GO:0051539">
    <property type="term" value="F:4 iron, 4 sulfur cluster binding"/>
    <property type="evidence" value="ECO:0007669"/>
    <property type="project" value="UniProtKB-UniRule"/>
</dbReference>
<dbReference type="GO" id="GO:0046429">
    <property type="term" value="F:4-hydroxy-3-methylbut-2-en-1-yl diphosphate synthase activity (ferredoxin)"/>
    <property type="evidence" value="ECO:0007669"/>
    <property type="project" value="UniProtKB-UniRule"/>
</dbReference>
<dbReference type="GO" id="GO:0141197">
    <property type="term" value="F:4-hydroxy-3-methylbut-2-enyl-diphosphate synthase activity (flavodoxin)"/>
    <property type="evidence" value="ECO:0007669"/>
    <property type="project" value="UniProtKB-EC"/>
</dbReference>
<dbReference type="GO" id="GO:0005506">
    <property type="term" value="F:iron ion binding"/>
    <property type="evidence" value="ECO:0007669"/>
    <property type="project" value="InterPro"/>
</dbReference>
<dbReference type="GO" id="GO:0019288">
    <property type="term" value="P:isopentenyl diphosphate biosynthetic process, methylerythritol 4-phosphate pathway"/>
    <property type="evidence" value="ECO:0007669"/>
    <property type="project" value="UniProtKB-UniRule"/>
</dbReference>
<dbReference type="GO" id="GO:0016114">
    <property type="term" value="P:terpenoid biosynthetic process"/>
    <property type="evidence" value="ECO:0007669"/>
    <property type="project" value="InterPro"/>
</dbReference>
<dbReference type="FunFam" id="3.30.413.10:FF:000012">
    <property type="entry name" value="4-hydroxy-3-methylbut-2-en-1-yl diphosphate synthase (flavodoxin)"/>
    <property type="match status" value="1"/>
</dbReference>
<dbReference type="Gene3D" id="3.20.20.20">
    <property type="entry name" value="Dihydropteroate synthase-like"/>
    <property type="match status" value="1"/>
</dbReference>
<dbReference type="Gene3D" id="3.30.413.10">
    <property type="entry name" value="Sulfite Reductase Hemoprotein, domain 1"/>
    <property type="match status" value="1"/>
</dbReference>
<dbReference type="HAMAP" id="MF_00159">
    <property type="entry name" value="IspG"/>
    <property type="match status" value="1"/>
</dbReference>
<dbReference type="InterPro" id="IPR011005">
    <property type="entry name" value="Dihydropteroate_synth-like_sf"/>
</dbReference>
<dbReference type="InterPro" id="IPR016425">
    <property type="entry name" value="IspG_bac"/>
</dbReference>
<dbReference type="InterPro" id="IPR004588">
    <property type="entry name" value="IspG_bac-typ"/>
</dbReference>
<dbReference type="InterPro" id="IPR045854">
    <property type="entry name" value="NO2/SO3_Rdtase_4Fe4S_sf"/>
</dbReference>
<dbReference type="NCBIfam" id="TIGR00612">
    <property type="entry name" value="ispG_gcpE"/>
    <property type="match status" value="1"/>
</dbReference>
<dbReference type="NCBIfam" id="NF001540">
    <property type="entry name" value="PRK00366.1"/>
    <property type="match status" value="1"/>
</dbReference>
<dbReference type="PANTHER" id="PTHR30454">
    <property type="entry name" value="4-HYDROXY-3-METHYLBUT-2-EN-1-YL DIPHOSPHATE SYNTHASE"/>
    <property type="match status" value="1"/>
</dbReference>
<dbReference type="PANTHER" id="PTHR30454:SF0">
    <property type="entry name" value="4-HYDROXY-3-METHYLBUT-2-EN-1-YL DIPHOSPHATE SYNTHASE (FERREDOXIN), CHLOROPLASTIC"/>
    <property type="match status" value="1"/>
</dbReference>
<dbReference type="Pfam" id="PF04551">
    <property type="entry name" value="GcpE"/>
    <property type="match status" value="1"/>
</dbReference>
<dbReference type="PIRSF" id="PIRSF004640">
    <property type="entry name" value="IspG"/>
    <property type="match status" value="1"/>
</dbReference>
<dbReference type="SUPFAM" id="SSF56014">
    <property type="entry name" value="Nitrite and sulphite reductase 4Fe-4S domain-like"/>
    <property type="match status" value="1"/>
</dbReference>
<protein>
    <recommendedName>
        <fullName evidence="1">4-hydroxy-3-methylbut-2-en-1-yl diphosphate synthase (flavodoxin)</fullName>
        <ecNumber evidence="1">1.17.7.3</ecNumber>
    </recommendedName>
    <alternativeName>
        <fullName evidence="1">1-hydroxy-2-methyl-2-(E)-butenyl 4-diphosphate synthase</fullName>
    </alternativeName>
</protein>
<keyword id="KW-0004">4Fe-4S</keyword>
<keyword id="KW-0408">Iron</keyword>
<keyword id="KW-0411">Iron-sulfur</keyword>
<keyword id="KW-0414">Isoprene biosynthesis</keyword>
<keyword id="KW-0479">Metal-binding</keyword>
<keyword id="KW-0560">Oxidoreductase</keyword>
<keyword id="KW-1185">Reference proteome</keyword>
<organism>
    <name type="scientific">Rhizobium leguminosarum bv. trifolii (strain WSM2304)</name>
    <dbReference type="NCBI Taxonomy" id="395492"/>
    <lineage>
        <taxon>Bacteria</taxon>
        <taxon>Pseudomonadati</taxon>
        <taxon>Pseudomonadota</taxon>
        <taxon>Alphaproteobacteria</taxon>
        <taxon>Hyphomicrobiales</taxon>
        <taxon>Rhizobiaceae</taxon>
        <taxon>Rhizobium/Agrobacterium group</taxon>
        <taxon>Rhizobium</taxon>
    </lineage>
</organism>
<evidence type="ECO:0000255" key="1">
    <source>
        <dbReference type="HAMAP-Rule" id="MF_00159"/>
    </source>
</evidence>
<sequence>MSPTADFDPKPRRASVAVDVGGVIVGGGAPVVVQSMTNTDTADIDSTVAQVAALHRAGSELVRITVDRDESAAAVPKIRERLLRLGMDVPLIGDFHYVGHKLLADHPDCAAALAKYRINPGNVGFKDKKDKQFAEIIEMAIRYDKPVRVGVNWGSLDQDLLTALMDENARAGSPLSARQVTREAIVQSALLSAALAEEIGLPRNRIILSAKVSQVQDLIAVNSMLAERSNHALHLGLTEAGMGTKGIVASSAAMGFVLQHGIGDTIRVSLTPEPNGDRTREVQVAQEILQVMGFRQFIPVVAACPGCGRTTSTVFQELAQNIQNDIRKNMPVWREKYPGVEALNVAVMGCIVNGPGESKHADIGISLPGTGETPAAPVFIDGKKALTLRGPNIAADFEALVVDYIEKRFGQRTAAE</sequence>
<comment type="function">
    <text evidence="1">Converts 2C-methyl-D-erythritol 2,4-cyclodiphosphate (ME-2,4cPP) into 1-hydroxy-2-methyl-2-(E)-butenyl 4-diphosphate.</text>
</comment>
<comment type="catalytic activity">
    <reaction evidence="1">
        <text>(2E)-4-hydroxy-3-methylbut-2-enyl diphosphate + oxidized [flavodoxin] + H2O + 2 H(+) = 2-C-methyl-D-erythritol 2,4-cyclic diphosphate + reduced [flavodoxin]</text>
        <dbReference type="Rhea" id="RHEA:43604"/>
        <dbReference type="Rhea" id="RHEA-COMP:10622"/>
        <dbReference type="Rhea" id="RHEA-COMP:10623"/>
        <dbReference type="ChEBI" id="CHEBI:15377"/>
        <dbReference type="ChEBI" id="CHEBI:15378"/>
        <dbReference type="ChEBI" id="CHEBI:57618"/>
        <dbReference type="ChEBI" id="CHEBI:58210"/>
        <dbReference type="ChEBI" id="CHEBI:58483"/>
        <dbReference type="ChEBI" id="CHEBI:128753"/>
        <dbReference type="EC" id="1.17.7.3"/>
    </reaction>
</comment>
<comment type="cofactor">
    <cofactor evidence="1">
        <name>[4Fe-4S] cluster</name>
        <dbReference type="ChEBI" id="CHEBI:49883"/>
    </cofactor>
    <text evidence="1">Binds 1 [4Fe-4S] cluster.</text>
</comment>
<comment type="pathway">
    <text evidence="1">Isoprenoid biosynthesis; isopentenyl diphosphate biosynthesis via DXP pathway; isopentenyl diphosphate from 1-deoxy-D-xylulose 5-phosphate: step 5/6.</text>
</comment>
<comment type="similarity">
    <text evidence="1">Belongs to the IspG family.</text>
</comment>
<proteinExistence type="inferred from homology"/>
<feature type="chain" id="PRO_1000097176" description="4-hydroxy-3-methylbut-2-en-1-yl diphosphate synthase (flavodoxin)">
    <location>
        <begin position="1"/>
        <end position="416"/>
    </location>
</feature>
<feature type="binding site" evidence="1">
    <location>
        <position position="304"/>
    </location>
    <ligand>
        <name>[4Fe-4S] cluster</name>
        <dbReference type="ChEBI" id="CHEBI:49883"/>
    </ligand>
</feature>
<feature type="binding site" evidence="1">
    <location>
        <position position="307"/>
    </location>
    <ligand>
        <name>[4Fe-4S] cluster</name>
        <dbReference type="ChEBI" id="CHEBI:49883"/>
    </ligand>
</feature>
<feature type="binding site" evidence="1">
    <location>
        <position position="350"/>
    </location>
    <ligand>
        <name>[4Fe-4S] cluster</name>
        <dbReference type="ChEBI" id="CHEBI:49883"/>
    </ligand>
</feature>
<feature type="binding site" evidence="1">
    <location>
        <position position="357"/>
    </location>
    <ligand>
        <name>[4Fe-4S] cluster</name>
        <dbReference type="ChEBI" id="CHEBI:49883"/>
    </ligand>
</feature>
<name>ISPG_RHILW</name>